<name>H1629_CYRHA</name>
<comment type="function">
    <text evidence="1">Probable ion channel inhibitor.</text>
</comment>
<comment type="subcellular location">
    <subcellularLocation>
        <location>Secreted</location>
    </subcellularLocation>
</comment>
<comment type="tissue specificity">
    <text>Expressed by the venom gland.</text>
</comment>
<comment type="domain">
    <text evidence="1">The presence of a 'disulfide through disulfide knot' structurally defines this protein as a knottin.</text>
</comment>
<comment type="similarity">
    <text evidence="5">Belongs to the neurotoxin 14 (magi-1) family. 01 (HNTX-16) subfamily.</text>
</comment>
<feature type="signal peptide" evidence="2">
    <location>
        <begin position="1"/>
        <end position="21"/>
    </location>
</feature>
<feature type="propeptide" id="PRO_0000400913" evidence="4">
    <location>
        <begin position="22"/>
        <end position="74"/>
    </location>
</feature>
<feature type="peptide" id="PRO_0000400914" description="U11-theraphotoxin-Hhn1a">
    <location>
        <begin position="75"/>
        <end position="113"/>
    </location>
</feature>
<feature type="region of interest" description="Disordered" evidence="3">
    <location>
        <begin position="58"/>
        <end position="83"/>
    </location>
</feature>
<feature type="compositionally biased region" description="Basic and acidic residues" evidence="3">
    <location>
        <begin position="58"/>
        <end position="69"/>
    </location>
</feature>
<feature type="disulfide bond" evidence="1">
    <location>
        <begin position="75"/>
        <end position="90"/>
    </location>
</feature>
<feature type="disulfide bond" evidence="1">
    <location>
        <begin position="82"/>
        <end position="95"/>
    </location>
</feature>
<feature type="disulfide bond" evidence="1">
    <location>
        <begin position="89"/>
        <end position="110"/>
    </location>
</feature>
<dbReference type="EMBL" id="GU293123">
    <property type="protein sequence ID" value="ADB56939.1"/>
    <property type="molecule type" value="Genomic_DNA"/>
</dbReference>
<dbReference type="SMR" id="D2Y2P6"/>
<dbReference type="ArachnoServer" id="AS001592">
    <property type="toxin name" value="U11-theraphotoxin-Hhn1a"/>
</dbReference>
<dbReference type="GO" id="GO:0005576">
    <property type="term" value="C:extracellular region"/>
    <property type="evidence" value="ECO:0007669"/>
    <property type="project" value="UniProtKB-SubCell"/>
</dbReference>
<dbReference type="GO" id="GO:0019871">
    <property type="term" value="F:sodium channel inhibitor activity"/>
    <property type="evidence" value="ECO:0007669"/>
    <property type="project" value="InterPro"/>
</dbReference>
<dbReference type="GO" id="GO:0090729">
    <property type="term" value="F:toxin activity"/>
    <property type="evidence" value="ECO:0007669"/>
    <property type="project" value="UniProtKB-KW"/>
</dbReference>
<dbReference type="InterPro" id="IPR012627">
    <property type="entry name" value="Toxin_22"/>
</dbReference>
<dbReference type="Pfam" id="PF08092">
    <property type="entry name" value="Toxin_22"/>
    <property type="match status" value="1"/>
</dbReference>
<organism>
    <name type="scientific">Cyriopagopus hainanus</name>
    <name type="common">Chinese bird spider</name>
    <name type="synonym">Haplopelma hainanum</name>
    <dbReference type="NCBI Taxonomy" id="209901"/>
    <lineage>
        <taxon>Eukaryota</taxon>
        <taxon>Metazoa</taxon>
        <taxon>Ecdysozoa</taxon>
        <taxon>Arthropoda</taxon>
        <taxon>Chelicerata</taxon>
        <taxon>Arachnida</taxon>
        <taxon>Araneae</taxon>
        <taxon>Mygalomorphae</taxon>
        <taxon>Theraphosidae</taxon>
        <taxon>Haplopelma</taxon>
    </lineage>
</organism>
<sequence length="113" mass="13043">MNTVRVAFLLVFVLAVSLGQADKDENRMEMQEKTEQGKSYLDFAENLLLQKLEEPEAKLLEEDSEESRNSRQKRCIGEGVPCDENDPRCCSGLVCLKPTLHGIWYKSYYCYKK</sequence>
<evidence type="ECO:0000250" key="1"/>
<evidence type="ECO:0000255" key="2"/>
<evidence type="ECO:0000256" key="3">
    <source>
        <dbReference type="SAM" id="MobiDB-lite"/>
    </source>
</evidence>
<evidence type="ECO:0000269" key="4">
    <source>
    </source>
</evidence>
<evidence type="ECO:0000305" key="5"/>
<accession>D2Y2P6</accession>
<keyword id="KW-0903">Direct protein sequencing</keyword>
<keyword id="KW-1015">Disulfide bond</keyword>
<keyword id="KW-0872">Ion channel impairing toxin</keyword>
<keyword id="KW-0960">Knottin</keyword>
<keyword id="KW-0964">Secreted</keyword>
<keyword id="KW-0732">Signal</keyword>
<keyword id="KW-0800">Toxin</keyword>
<protein>
    <recommendedName>
        <fullName>U11-theraphotoxin-Hhn1a</fullName>
        <shortName>U11-TRTX-Hhn1a</shortName>
    </recommendedName>
    <alternativeName>
        <fullName>Hainantoxin-XVI.29</fullName>
        <shortName>HNTX-XVI.29</shortName>
    </alternativeName>
    <alternativeName>
        <fullName>Peptide F4-19.87</fullName>
    </alternativeName>
</protein>
<proteinExistence type="evidence at protein level"/>
<reference key="1">
    <citation type="journal article" date="2010" name="J. Proteome Res.">
        <title>Molecular diversification of peptide toxins from the tarantula Haplopelma hainanum (Ornithoctonus hainana) venom based on transcriptomic, peptidomic, and genomic analyses.</title>
        <authorList>
            <person name="Tang X."/>
            <person name="Zhang Y."/>
            <person name="Hu W."/>
            <person name="Xu D."/>
            <person name="Tao H."/>
            <person name="Yang X."/>
            <person name="Li Y."/>
            <person name="Jiang L."/>
            <person name="Liang S."/>
        </authorList>
    </citation>
    <scope>NUCLEOTIDE SEQUENCE [LARGE SCALE GENOMIC DNA]</scope>
    <scope>PROTEIN SEQUENCE OF 75-113</scope>
    <scope>IDENTIFICATION BY MASS SPECTROMETRY</scope>
    <source>
        <tissue>Venom</tissue>
        <tissue>Venom gland</tissue>
    </source>
</reference>